<organism>
    <name type="scientific">Rattus norvegicus</name>
    <name type="common">Rat</name>
    <dbReference type="NCBI Taxonomy" id="10116"/>
    <lineage>
        <taxon>Eukaryota</taxon>
        <taxon>Metazoa</taxon>
        <taxon>Chordata</taxon>
        <taxon>Craniata</taxon>
        <taxon>Vertebrata</taxon>
        <taxon>Euteleostomi</taxon>
        <taxon>Mammalia</taxon>
        <taxon>Eutheria</taxon>
        <taxon>Euarchontoglires</taxon>
        <taxon>Glires</taxon>
        <taxon>Rodentia</taxon>
        <taxon>Myomorpha</taxon>
        <taxon>Muroidea</taxon>
        <taxon>Muridae</taxon>
        <taxon>Murinae</taxon>
        <taxon>Rattus</taxon>
    </lineage>
</organism>
<proteinExistence type="evidence at protein level"/>
<reference key="1">
    <citation type="journal article" date="1998" name="Neuron">
        <title>CRIPT, a novel postsynaptic protein that binds to the third PDZ domain of PSD-95/SAP90.</title>
        <authorList>
            <person name="Niethammer M."/>
            <person name="Valtschanoff J.G."/>
            <person name="Kapoor T.M."/>
            <person name="Allison D.W."/>
            <person name="Weinberg R.J."/>
            <person name="Craig A.M."/>
            <person name="Sheng M."/>
        </authorList>
    </citation>
    <scope>NUCLEOTIDE SEQUENCE [MRNA]</scope>
    <scope>FUNCTION</scope>
    <scope>INTERACTION WITH DLG4 AND TUBB1</scope>
    <scope>MUTAGENESIS OF GLN-98; SER-100 AND VAL-101</scope>
    <scope>TISSUE SPECIFICITY</scope>
</reference>
<reference key="2">
    <citation type="journal article" date="1999" name="Nat. Neurosci.">
        <title>Microtubule binding by CRIPT and its potential role in the synaptic clustering of PSD-95.</title>
        <authorList>
            <person name="Passafaro M."/>
            <person name="Sala C."/>
            <person name="Niethammer M."/>
            <person name="Sheng M."/>
        </authorList>
    </citation>
    <scope>FUNCTION</scope>
    <scope>ASSOCIATION WITH MICROTUBULE</scope>
    <scope>SUBCELLULAR LOCATION</scope>
    <scope>MUTAGENESIS OF VAL-101</scope>
</reference>
<evidence type="ECO:0000250" key="1">
    <source>
        <dbReference type="UniProtKB" id="Q9P021"/>
    </source>
</evidence>
<evidence type="ECO:0000256" key="2">
    <source>
        <dbReference type="SAM" id="MobiDB-lite"/>
    </source>
</evidence>
<evidence type="ECO:0000269" key="3">
    <source>
    </source>
</evidence>
<evidence type="ECO:0000269" key="4">
    <source>
    </source>
</evidence>
<evidence type="ECO:0000305" key="5"/>
<evidence type="ECO:0007829" key="6">
    <source>
        <dbReference type="PDB" id="5HEY"/>
    </source>
</evidence>
<comment type="function">
    <text evidence="1 3 4">As a component of the minor spliceosome, involved in the splicing of U12-type introns in pre-mRNAs (By similarity). Involved in the cytoskeletal anchoring of DLG4 in excitatory synapses (PubMed:10570482, PubMed:9581762).</text>
</comment>
<comment type="subunit">
    <text evidence="1 4">Component of the minor spliceosome. Within this complex, interacts with RNF113A, as well as with SF3B1/SF3b155, SF3B2/SF3b145 and PHF5A/SF3b14b (By similarity). Interacts with DLG4 and TUBB1. Interacts strongly with the PDZ3 domain of members of the DLG4 family. Associates with microtubules.</text>
</comment>
<comment type="subcellular location">
    <subcellularLocation>
        <location evidence="3">Cytoplasm</location>
    </subcellularLocation>
    <subcellularLocation>
        <location evidence="3">Synapse</location>
    </subcellularLocation>
    <subcellularLocation>
        <location evidence="3">Cell projection</location>
        <location evidence="3">Dendritic spine</location>
    </subcellularLocation>
    <text>Colocalizes with DLG4 in asymmetric synapses.</text>
</comment>
<comment type="tissue specificity">
    <text evidence="4">Expressed in striatum, cortex, midbrain, Purkinje cells of the cerebellum, pyramidal neurons of the hippocampus and neuropil. Expressed in heart, brain, lung, liver, kidney and testis.</text>
</comment>
<comment type="similarity">
    <text evidence="5">Belongs to the CRIPT family.</text>
</comment>
<sequence length="101" mass="11271">MVCEKCEKKLGRVITPDTWKDGARNTTESGGRKLNENKALTSKKARFDPYGKNKFSTCRICKSSVHQPGSHYCQGCAYKKGICAMCGKKVLDTKNYKQTSV</sequence>
<keyword id="KW-0002">3D-structure</keyword>
<keyword id="KW-0966">Cell projection</keyword>
<keyword id="KW-0963">Cytoplasm</keyword>
<keyword id="KW-0507">mRNA processing</keyword>
<keyword id="KW-0508">mRNA splicing</keyword>
<keyword id="KW-1185">Reference proteome</keyword>
<keyword id="KW-0747">Spliceosome</keyword>
<keyword id="KW-0770">Synapse</keyword>
<protein>
    <recommendedName>
        <fullName>Cysteine-rich PDZ-binding protein</fullName>
    </recommendedName>
    <alternativeName>
        <fullName>Cysteine-rich interactor of PDZ three</fullName>
        <shortName>Cysteine-rich interactor of PDZ3</shortName>
    </alternativeName>
</protein>
<feature type="chain" id="PRO_0000314565" description="Cysteine-rich PDZ-binding protein">
    <location>
        <begin position="1"/>
        <end position="101"/>
    </location>
</feature>
<feature type="region of interest" description="Disordered" evidence="2">
    <location>
        <begin position="19"/>
        <end position="38"/>
    </location>
</feature>
<feature type="region of interest" description="Sufficient for interaction with DLG4" evidence="4">
    <location>
        <begin position="95"/>
        <end position="101"/>
    </location>
</feature>
<feature type="region of interest" description="PDZ3-binding">
    <location>
        <begin position="98"/>
        <end position="101"/>
    </location>
</feature>
<feature type="mutagenesis site" description="Abolishes interaction with DLG4. Strongly abolishes interaction with DLG4; when associated with D-100." evidence="4">
    <original>Q</original>
    <variation>E</variation>
    <location>
        <position position="98"/>
    </location>
</feature>
<feature type="mutagenesis site" description="Abolishes interaction with DLG4. Strongly abolishes interaction with DLG4; when associated with E-98." evidence="4">
    <original>S</original>
    <variation>D</variation>
    <location>
        <position position="100"/>
    </location>
</feature>
<feature type="mutagenesis site" description="Abolishes interaction with DLG4. Does not redistribute DLG4 to microtubules. Associates with microtubules." evidence="3 4">
    <original>V</original>
    <variation>A</variation>
    <location>
        <position position="101"/>
    </location>
</feature>
<feature type="strand" evidence="6">
    <location>
        <begin position="98"/>
        <end position="100"/>
    </location>
</feature>
<name>CRIPT_RAT</name>
<dbReference type="EMBL" id="AF047384">
    <property type="protein sequence ID" value="AAC40102.1"/>
    <property type="molecule type" value="mRNA"/>
</dbReference>
<dbReference type="RefSeq" id="NP_063972.1">
    <property type="nucleotide sequence ID" value="NM_019907.1"/>
</dbReference>
<dbReference type="PDB" id="5HEB">
    <property type="method" value="X-ray"/>
    <property type="resolution" value="1.65 A"/>
    <property type="chains" value="B=93-101"/>
</dbReference>
<dbReference type="PDB" id="5HED">
    <property type="method" value="X-ray"/>
    <property type="resolution" value="1.70 A"/>
    <property type="chains" value="B=93-101"/>
</dbReference>
<dbReference type="PDB" id="5HEY">
    <property type="method" value="X-ray"/>
    <property type="resolution" value="1.50 A"/>
    <property type="chains" value="B=93-101"/>
</dbReference>
<dbReference type="PDB" id="5HF1">
    <property type="method" value="X-ray"/>
    <property type="resolution" value="1.75 A"/>
    <property type="chains" value="B=93-101"/>
</dbReference>
<dbReference type="PDB" id="5HFB">
    <property type="method" value="X-ray"/>
    <property type="resolution" value="1.62 A"/>
    <property type="chains" value="B=93-101"/>
</dbReference>
<dbReference type="PDB" id="5HFC">
    <property type="method" value="X-ray"/>
    <property type="resolution" value="1.85 A"/>
    <property type="chains" value="B=93-101"/>
</dbReference>
<dbReference type="PDB" id="5HFE">
    <property type="method" value="X-ray"/>
    <property type="resolution" value="1.80 A"/>
    <property type="chains" value="B=93-101"/>
</dbReference>
<dbReference type="PDB" id="5HFF">
    <property type="method" value="X-ray"/>
    <property type="resolution" value="1.75 A"/>
    <property type="chains" value="B=93-101"/>
</dbReference>
<dbReference type="PDBsum" id="5HEB"/>
<dbReference type="PDBsum" id="5HED"/>
<dbReference type="PDBsum" id="5HEY"/>
<dbReference type="PDBsum" id="5HF1"/>
<dbReference type="PDBsum" id="5HFB"/>
<dbReference type="PDBsum" id="5HFC"/>
<dbReference type="PDBsum" id="5HFE"/>
<dbReference type="PDBsum" id="5HFF"/>
<dbReference type="SMR" id="Q792Q4"/>
<dbReference type="BioGRID" id="248569">
    <property type="interactions" value="1"/>
</dbReference>
<dbReference type="ELM" id="Q792Q4"/>
<dbReference type="FunCoup" id="Q792Q4">
    <property type="interactions" value="1196"/>
</dbReference>
<dbReference type="IntAct" id="Q792Q4">
    <property type="interactions" value="1"/>
</dbReference>
<dbReference type="STRING" id="10116.ENSRNOP00000020534"/>
<dbReference type="iPTMnet" id="Q792Q4"/>
<dbReference type="PhosphoSitePlus" id="Q792Q4"/>
<dbReference type="PaxDb" id="10116-ENSRNOP00000020534"/>
<dbReference type="Ensembl" id="ENSRNOT00000020534.7">
    <property type="protein sequence ID" value="ENSRNOP00000020534.5"/>
    <property type="gene ID" value="ENSRNOG00000015215.7"/>
</dbReference>
<dbReference type="GeneID" id="56725"/>
<dbReference type="KEGG" id="rno:56725"/>
<dbReference type="UCSC" id="RGD:621545">
    <property type="organism name" value="rat"/>
</dbReference>
<dbReference type="AGR" id="RGD:621545"/>
<dbReference type="CTD" id="9419"/>
<dbReference type="RGD" id="621545">
    <property type="gene designation" value="Cript"/>
</dbReference>
<dbReference type="eggNOG" id="KOG3476">
    <property type="taxonomic scope" value="Eukaryota"/>
</dbReference>
<dbReference type="GeneTree" id="ENSGT00950000183100"/>
<dbReference type="HOGENOM" id="CLU_133934_0_0_1"/>
<dbReference type="InParanoid" id="Q792Q4"/>
<dbReference type="OrthoDB" id="147332at2759"/>
<dbReference type="PhylomeDB" id="Q792Q4"/>
<dbReference type="TreeFam" id="TF300144"/>
<dbReference type="PRO" id="PR:Q792Q4"/>
<dbReference type="Proteomes" id="UP000002494">
    <property type="component" value="Chromosome 6"/>
</dbReference>
<dbReference type="Bgee" id="ENSRNOG00000015215">
    <property type="expression patterns" value="Expressed in thymus and 20 other cell types or tissues"/>
</dbReference>
<dbReference type="GO" id="GO:0005737">
    <property type="term" value="C:cytoplasm"/>
    <property type="evidence" value="ECO:0007669"/>
    <property type="project" value="UniProtKB-SubCell"/>
</dbReference>
<dbReference type="GO" id="GO:0030425">
    <property type="term" value="C:dendrite"/>
    <property type="evidence" value="ECO:0000314"/>
    <property type="project" value="RGD"/>
</dbReference>
<dbReference type="GO" id="GO:0043198">
    <property type="term" value="C:dendritic shaft"/>
    <property type="evidence" value="ECO:0000314"/>
    <property type="project" value="RGD"/>
</dbReference>
<dbReference type="GO" id="GO:0043197">
    <property type="term" value="C:dendritic spine"/>
    <property type="evidence" value="ECO:0000314"/>
    <property type="project" value="RGD"/>
</dbReference>
<dbReference type="GO" id="GO:0098978">
    <property type="term" value="C:glutamatergic synapse"/>
    <property type="evidence" value="ECO:0000314"/>
    <property type="project" value="SynGO"/>
</dbReference>
<dbReference type="GO" id="GO:0043025">
    <property type="term" value="C:neuronal cell body"/>
    <property type="evidence" value="ECO:0000314"/>
    <property type="project" value="RGD"/>
</dbReference>
<dbReference type="GO" id="GO:0099092">
    <property type="term" value="C:postsynaptic density, intracellular component"/>
    <property type="evidence" value="ECO:0000314"/>
    <property type="project" value="SynGO"/>
</dbReference>
<dbReference type="GO" id="GO:0005681">
    <property type="term" value="C:spliceosomal complex"/>
    <property type="evidence" value="ECO:0007669"/>
    <property type="project" value="UniProtKB-KW"/>
</dbReference>
<dbReference type="GO" id="GO:0008017">
    <property type="term" value="F:microtubule binding"/>
    <property type="evidence" value="ECO:0000315"/>
    <property type="project" value="UniProtKB"/>
</dbReference>
<dbReference type="GO" id="GO:0030165">
    <property type="term" value="F:PDZ domain binding"/>
    <property type="evidence" value="ECO:0000314"/>
    <property type="project" value="RGD"/>
</dbReference>
<dbReference type="GO" id="GO:0044877">
    <property type="term" value="F:protein-containing complex binding"/>
    <property type="evidence" value="ECO:0000353"/>
    <property type="project" value="RGD"/>
</dbReference>
<dbReference type="GO" id="GO:0097110">
    <property type="term" value="F:scaffold protein binding"/>
    <property type="evidence" value="ECO:0000266"/>
    <property type="project" value="RGD"/>
</dbReference>
<dbReference type="GO" id="GO:0031122">
    <property type="term" value="P:cytoplasmic microtubule organization"/>
    <property type="evidence" value="ECO:0000314"/>
    <property type="project" value="RGD"/>
</dbReference>
<dbReference type="GO" id="GO:0006397">
    <property type="term" value="P:mRNA processing"/>
    <property type="evidence" value="ECO:0007669"/>
    <property type="project" value="UniProtKB-KW"/>
</dbReference>
<dbReference type="GO" id="GO:0035372">
    <property type="term" value="P:protein localization to microtubule"/>
    <property type="evidence" value="ECO:0000315"/>
    <property type="project" value="UniProtKB"/>
</dbReference>
<dbReference type="GO" id="GO:0099151">
    <property type="term" value="P:regulation of postsynaptic density assembly"/>
    <property type="evidence" value="ECO:0000314"/>
    <property type="project" value="SynGO"/>
</dbReference>
<dbReference type="GO" id="GO:1902897">
    <property type="term" value="P:regulation of postsynaptic density protein 95 clustering"/>
    <property type="evidence" value="ECO:0000315"/>
    <property type="project" value="UniProtKB"/>
</dbReference>
<dbReference type="GO" id="GO:0008380">
    <property type="term" value="P:RNA splicing"/>
    <property type="evidence" value="ECO:0007669"/>
    <property type="project" value="UniProtKB-KW"/>
</dbReference>
<dbReference type="InterPro" id="IPR019367">
    <property type="entry name" value="PDZ-binding_CRIPT"/>
</dbReference>
<dbReference type="PANTHER" id="PTHR11805">
    <property type="entry name" value="CYSTEINE-RICH PDZ-BINDING PROTEIN"/>
    <property type="match status" value="1"/>
</dbReference>
<dbReference type="PANTHER" id="PTHR11805:SF1">
    <property type="entry name" value="CYSTEINE-RICH PDZ-BINDING PROTEIN"/>
    <property type="match status" value="1"/>
</dbReference>
<dbReference type="Pfam" id="PF10235">
    <property type="entry name" value="Cript"/>
    <property type="match status" value="1"/>
</dbReference>
<accession>Q792Q4</accession>
<gene>
    <name type="primary">Cript</name>
</gene>